<evidence type="ECO:0000250" key="1"/>
<evidence type="ECO:0000250" key="2">
    <source>
        <dbReference type="UniProtKB" id="O42187"/>
    </source>
</evidence>
<evidence type="ECO:0000255" key="3">
    <source>
        <dbReference type="PROSITE-ProRule" id="PRU10035"/>
    </source>
</evidence>
<evidence type="ECO:0000255" key="4">
    <source>
        <dbReference type="PROSITE-ProRule" id="PRU10036"/>
    </source>
</evidence>
<evidence type="ECO:0000269" key="5">
    <source>
    </source>
</evidence>
<evidence type="ECO:0000305" key="6"/>
<evidence type="ECO:0000305" key="7">
    <source>
    </source>
</evidence>
<feature type="chain" id="PRO_0000429743" description="Acidic phospholipase A2 BlatPLA2">
    <location>
        <begin position="1"/>
        <end position="122"/>
    </location>
</feature>
<feature type="active site" evidence="2">
    <location>
        <position position="47"/>
    </location>
</feature>
<feature type="active site" evidence="2">
    <location>
        <position position="89"/>
    </location>
</feature>
<feature type="binding site" evidence="2">
    <location>
        <position position="27"/>
    </location>
    <ligand>
        <name>Ca(2+)</name>
        <dbReference type="ChEBI" id="CHEBI:29108"/>
    </ligand>
</feature>
<feature type="binding site" evidence="2">
    <location>
        <position position="29"/>
    </location>
    <ligand>
        <name>Ca(2+)</name>
        <dbReference type="ChEBI" id="CHEBI:29108"/>
    </ligand>
</feature>
<feature type="binding site" evidence="2">
    <location>
        <position position="31"/>
    </location>
    <ligand>
        <name>Ca(2+)</name>
        <dbReference type="ChEBI" id="CHEBI:29108"/>
    </ligand>
</feature>
<feature type="binding site" evidence="2">
    <location>
        <position position="48"/>
    </location>
    <ligand>
        <name>Ca(2+)</name>
        <dbReference type="ChEBI" id="CHEBI:29108"/>
    </ligand>
</feature>
<feature type="disulfide bond" evidence="2">
    <location>
        <begin position="26"/>
        <end position="115"/>
    </location>
</feature>
<feature type="disulfide bond" evidence="2">
    <location>
        <begin position="28"/>
        <end position="44"/>
    </location>
</feature>
<feature type="disulfide bond" evidence="2">
    <location>
        <begin position="43"/>
        <end position="95"/>
    </location>
</feature>
<feature type="disulfide bond" evidence="2">
    <location>
        <begin position="49"/>
        <end position="122"/>
    </location>
</feature>
<feature type="disulfide bond" evidence="2">
    <location>
        <begin position="50"/>
        <end position="88"/>
    </location>
</feature>
<feature type="disulfide bond" evidence="2">
    <location>
        <begin position="57"/>
        <end position="81"/>
    </location>
</feature>
<feature type="disulfide bond" evidence="2">
    <location>
        <begin position="75"/>
        <end position="86"/>
    </location>
</feature>
<name>PA2_BOTLA</name>
<reference key="1">
    <citation type="journal article" date="2013" name="Toxicon">
        <title>Amino acid sequence and biological characterization of BlatPLA(2), a non-toxic acidic phospholipase A(2) from the venom of the arboreal snake Bothriechis lateralis from Costa Rica.</title>
        <authorList>
            <person name="Van der Laat M."/>
            <person name="Fernandez J."/>
            <person name="Durban J."/>
            <person name="Villalobos E."/>
            <person name="Camacho E."/>
            <person name="Calvete J.J."/>
            <person name="Lomonte B."/>
        </authorList>
    </citation>
    <scope>PROTEIN SEQUENCE</scope>
    <scope>FUNCTION</scope>
    <scope>CATALYTIC ACTIVITY</scope>
    <scope>SUBUNIT</scope>
    <scope>SUBCELLULAR LOCATION</scope>
    <scope>TISSUE SPECIFICITY</scope>
    <scope>MASS SPECTROMETRY</scope>
    <source>
        <tissue>Venom</tissue>
    </source>
</reference>
<accession>C0HJC1</accession>
<keyword id="KW-0106">Calcium</keyword>
<keyword id="KW-0903">Direct protein sequencing</keyword>
<keyword id="KW-1015">Disulfide bond</keyword>
<keyword id="KW-0378">Hydrolase</keyword>
<keyword id="KW-0442">Lipid degradation</keyword>
<keyword id="KW-0443">Lipid metabolism</keyword>
<keyword id="KW-0479">Metal-binding</keyword>
<keyword id="KW-0964">Secreted</keyword>
<organism>
    <name type="scientific">Bothriechis lateralis</name>
    <name type="common">Side-striped palm pitviper</name>
    <dbReference type="NCBI Taxonomy" id="44727"/>
    <lineage>
        <taxon>Eukaryota</taxon>
        <taxon>Metazoa</taxon>
        <taxon>Chordata</taxon>
        <taxon>Craniata</taxon>
        <taxon>Vertebrata</taxon>
        <taxon>Euteleostomi</taxon>
        <taxon>Lepidosauria</taxon>
        <taxon>Squamata</taxon>
        <taxon>Bifurcata</taxon>
        <taxon>Unidentata</taxon>
        <taxon>Episquamata</taxon>
        <taxon>Toxicofera</taxon>
        <taxon>Serpentes</taxon>
        <taxon>Colubroidea</taxon>
        <taxon>Viperidae</taxon>
        <taxon>Crotalinae</taxon>
        <taxon>Bothriechis</taxon>
    </lineage>
</organism>
<sequence>SLLQFREMITKMTGKEPIFFYAFYGCYCGLGGRGKPQDATDRCCFVHDCCYGKVTGCDPKKDIYTYSEENGAFVCGGDDPCKKEICECDKNAAICFRNDLDTYDYKYLLYSPENCQEESEPC</sequence>
<proteinExistence type="evidence at protein level"/>
<protein>
    <recommendedName>
        <fullName>Acidic phospholipase A2 BlatPLA2</fullName>
        <shortName>svPLA2</shortName>
        <ecNumber>3.1.1.4</ecNumber>
    </recommendedName>
    <alternativeName>
        <fullName>Phosphatidylcholine 2-acylhydrolase</fullName>
    </alternativeName>
</protein>
<comment type="function">
    <text evidence="5">Acidic phospholipase A2 (PLA2) that only causes a mild edema, when subcutaneously injected in the mice foot. PLA2 catalyzes the calcium-dependent hydrolysis of the 2-acyl groups in 3-sn-phosphoglycerides.</text>
</comment>
<comment type="catalytic activity">
    <reaction evidence="3 4 5">
        <text>a 1,2-diacyl-sn-glycero-3-phosphocholine + H2O = a 1-acyl-sn-glycero-3-phosphocholine + a fatty acid + H(+)</text>
        <dbReference type="Rhea" id="RHEA:15801"/>
        <dbReference type="ChEBI" id="CHEBI:15377"/>
        <dbReference type="ChEBI" id="CHEBI:15378"/>
        <dbReference type="ChEBI" id="CHEBI:28868"/>
        <dbReference type="ChEBI" id="CHEBI:57643"/>
        <dbReference type="ChEBI" id="CHEBI:58168"/>
        <dbReference type="EC" id="3.1.1.4"/>
    </reaction>
</comment>
<comment type="cofactor">
    <cofactor evidence="1">
        <name>Ca(2+)</name>
        <dbReference type="ChEBI" id="CHEBI:29108"/>
    </cofactor>
    <text evidence="1">Binds 1 Ca(2+) ion.</text>
</comment>
<comment type="subunit">
    <text evidence="5">Monomer.</text>
</comment>
<comment type="subcellular location">
    <subcellularLocation>
        <location evidence="5">Secreted</location>
    </subcellularLocation>
</comment>
<comment type="tissue specificity">
    <text evidence="5">Expressed by the venom gland.</text>
</comment>
<comment type="mass spectrometry">
    <text>Average mass, the difference between the calculated and the experimental values corresponds to a potassium adduct.</text>
</comment>
<comment type="miscellaneous">
    <text evidence="7">Is not myotoxic or lethal. Lacks anti-coagulant, platelet aggregating or anti-aggregating activities (PubMed:23872034).</text>
</comment>
<comment type="similarity">
    <text evidence="6">Belongs to the phospholipase A2 family. Group II subfamily. D49 sub-subfamily.</text>
</comment>
<dbReference type="EC" id="3.1.1.4"/>
<dbReference type="SMR" id="C0HJC1"/>
<dbReference type="GO" id="GO:0005576">
    <property type="term" value="C:extracellular region"/>
    <property type="evidence" value="ECO:0007669"/>
    <property type="project" value="UniProtKB-SubCell"/>
</dbReference>
<dbReference type="GO" id="GO:0005509">
    <property type="term" value="F:calcium ion binding"/>
    <property type="evidence" value="ECO:0007669"/>
    <property type="project" value="InterPro"/>
</dbReference>
<dbReference type="GO" id="GO:0047498">
    <property type="term" value="F:calcium-dependent phospholipase A2 activity"/>
    <property type="evidence" value="ECO:0007669"/>
    <property type="project" value="TreeGrafter"/>
</dbReference>
<dbReference type="GO" id="GO:0005543">
    <property type="term" value="F:phospholipid binding"/>
    <property type="evidence" value="ECO:0007669"/>
    <property type="project" value="TreeGrafter"/>
</dbReference>
<dbReference type="GO" id="GO:0050482">
    <property type="term" value="P:arachidonate secretion"/>
    <property type="evidence" value="ECO:0007669"/>
    <property type="project" value="InterPro"/>
</dbReference>
<dbReference type="GO" id="GO:0016042">
    <property type="term" value="P:lipid catabolic process"/>
    <property type="evidence" value="ECO:0007669"/>
    <property type="project" value="UniProtKB-KW"/>
</dbReference>
<dbReference type="GO" id="GO:0042130">
    <property type="term" value="P:negative regulation of T cell proliferation"/>
    <property type="evidence" value="ECO:0007669"/>
    <property type="project" value="TreeGrafter"/>
</dbReference>
<dbReference type="GO" id="GO:0006644">
    <property type="term" value="P:phospholipid metabolic process"/>
    <property type="evidence" value="ECO:0007669"/>
    <property type="project" value="InterPro"/>
</dbReference>
<dbReference type="CDD" id="cd00125">
    <property type="entry name" value="PLA2c"/>
    <property type="match status" value="1"/>
</dbReference>
<dbReference type="FunFam" id="1.20.90.10:FF:000001">
    <property type="entry name" value="Basic phospholipase A2 homolog"/>
    <property type="match status" value="1"/>
</dbReference>
<dbReference type="Gene3D" id="1.20.90.10">
    <property type="entry name" value="Phospholipase A2 domain"/>
    <property type="match status" value="1"/>
</dbReference>
<dbReference type="InterPro" id="IPR001211">
    <property type="entry name" value="PLipase_A2"/>
</dbReference>
<dbReference type="InterPro" id="IPR033112">
    <property type="entry name" value="PLipase_A2_Asp_AS"/>
</dbReference>
<dbReference type="InterPro" id="IPR016090">
    <property type="entry name" value="PLipase_A2_dom"/>
</dbReference>
<dbReference type="InterPro" id="IPR036444">
    <property type="entry name" value="PLipase_A2_dom_sf"/>
</dbReference>
<dbReference type="InterPro" id="IPR033113">
    <property type="entry name" value="PLipase_A2_His_AS"/>
</dbReference>
<dbReference type="PANTHER" id="PTHR11716">
    <property type="entry name" value="PHOSPHOLIPASE A2 FAMILY MEMBER"/>
    <property type="match status" value="1"/>
</dbReference>
<dbReference type="PANTHER" id="PTHR11716:SF9">
    <property type="entry name" value="PHOSPHOLIPASE A2, MEMBRANE ASSOCIATED"/>
    <property type="match status" value="1"/>
</dbReference>
<dbReference type="Pfam" id="PF00068">
    <property type="entry name" value="Phospholip_A2_1"/>
    <property type="match status" value="1"/>
</dbReference>
<dbReference type="PRINTS" id="PR00389">
    <property type="entry name" value="PHPHLIPASEA2"/>
</dbReference>
<dbReference type="SMART" id="SM00085">
    <property type="entry name" value="PA2c"/>
    <property type="match status" value="1"/>
</dbReference>
<dbReference type="SUPFAM" id="SSF48619">
    <property type="entry name" value="Phospholipase A2, PLA2"/>
    <property type="match status" value="1"/>
</dbReference>
<dbReference type="PROSITE" id="PS00119">
    <property type="entry name" value="PA2_ASP"/>
    <property type="match status" value="1"/>
</dbReference>
<dbReference type="PROSITE" id="PS00118">
    <property type="entry name" value="PA2_HIS"/>
    <property type="match status" value="1"/>
</dbReference>